<sequence length="110" mass="12449">MKFVLLFGVLLVTLFSYSSAEMLDDFDQADEDELLSLIEKEEARKDCIPKHHECTNNKHGCCRGHLFKYKCQCTTVVTQSGEETERCFCGTPPRHKAAELVVGFGKKIFG</sequence>
<evidence type="ECO:0000250" key="1"/>
<evidence type="ECO:0000255" key="2"/>
<evidence type="ECO:0000305" key="3"/>
<proteinExistence type="evidence at transcript level"/>
<feature type="signal peptide" evidence="2">
    <location>
        <begin position="1"/>
        <end position="20"/>
    </location>
</feature>
<feature type="propeptide" id="PRO_0000401599" evidence="1">
    <location>
        <begin position="21"/>
        <end position="44"/>
    </location>
</feature>
<feature type="chain" id="PRO_0000401600" description="U1-lycotoxin-Ls1jj">
    <location>
        <begin position="45"/>
        <end position="110"/>
    </location>
</feature>
<feature type="disulfide bond" evidence="1">
    <location>
        <begin position="47"/>
        <end position="62"/>
    </location>
</feature>
<feature type="disulfide bond" evidence="1">
    <location>
        <begin position="54"/>
        <end position="71"/>
    </location>
</feature>
<feature type="disulfide bond" evidence="1">
    <location>
        <begin position="61"/>
        <end position="89"/>
    </location>
</feature>
<feature type="disulfide bond" evidence="1">
    <location>
        <begin position="73"/>
        <end position="87"/>
    </location>
</feature>
<comment type="subcellular location">
    <subcellularLocation>
        <location evidence="1">Secreted</location>
    </subcellularLocation>
</comment>
<comment type="tissue specificity">
    <text>Expressed by the venom gland.</text>
</comment>
<comment type="domain">
    <text evidence="1">The presence of a 'disulfide through disulfide knot' structurally defines this protein as a knottin.</text>
</comment>
<comment type="similarity">
    <text evidence="3">Belongs to the neurotoxin 19 (CSTX) family. 03 subfamily.</text>
</comment>
<keyword id="KW-1015">Disulfide bond</keyword>
<keyword id="KW-0960">Knottin</keyword>
<keyword id="KW-0964">Secreted</keyword>
<keyword id="KW-0732">Signal</keyword>
<keyword id="KW-0800">Toxin</keyword>
<dbReference type="EMBL" id="EU925975">
    <property type="protein sequence ID" value="ACI41307.1"/>
    <property type="molecule type" value="mRNA"/>
</dbReference>
<dbReference type="EMBL" id="FM863979">
    <property type="protein sequence ID" value="CAS03577.1"/>
    <property type="molecule type" value="mRNA"/>
</dbReference>
<dbReference type="SMR" id="B6DCP1"/>
<dbReference type="ArachnoServer" id="AS000924">
    <property type="toxin name" value="U1-lycotoxin-Ls1jj"/>
</dbReference>
<dbReference type="GO" id="GO:0005576">
    <property type="term" value="C:extracellular region"/>
    <property type="evidence" value="ECO:0007669"/>
    <property type="project" value="UniProtKB-SubCell"/>
</dbReference>
<dbReference type="GO" id="GO:0090729">
    <property type="term" value="F:toxin activity"/>
    <property type="evidence" value="ECO:0007669"/>
    <property type="project" value="UniProtKB-KW"/>
</dbReference>
<dbReference type="InterPro" id="IPR019553">
    <property type="entry name" value="Spider_toxin_CSTX_knottin"/>
</dbReference>
<dbReference type="InterPro" id="IPR011142">
    <property type="entry name" value="Spider_toxin_CSTX_Knottin_CS"/>
</dbReference>
<dbReference type="Pfam" id="PF10530">
    <property type="entry name" value="Toxin_35"/>
    <property type="match status" value="1"/>
</dbReference>
<dbReference type="PROSITE" id="PS60029">
    <property type="entry name" value="SPIDER_CSTX"/>
    <property type="match status" value="1"/>
</dbReference>
<protein>
    <recommendedName>
        <fullName>U1-lycotoxin-Ls1jj</fullName>
    </recommendedName>
    <alternativeName>
        <fullName>Toxin-like structure LSTX-A52</fullName>
    </alternativeName>
</protein>
<reference key="1">
    <citation type="journal article" date="2010" name="Zoology">
        <title>Transcriptome analysis of the venom glands of the Chinese wolf spider Lycosa singoriensis.</title>
        <authorList>
            <person name="Zhang Y."/>
            <person name="Chen J."/>
            <person name="Tang X."/>
            <person name="Wang F."/>
            <person name="Jiang L."/>
            <person name="Xiong X."/>
            <person name="Wang M."/>
            <person name="Rong M."/>
            <person name="Liu Z."/>
            <person name="Liang S."/>
        </authorList>
    </citation>
    <scope>NUCLEOTIDE SEQUENCE [LARGE SCALE MRNA]</scope>
    <source>
        <tissue>Venom gland</tissue>
    </source>
</reference>
<organism>
    <name type="scientific">Lycosa singoriensis</name>
    <name type="common">Wolf spider</name>
    <name type="synonym">Aranea singoriensis</name>
    <dbReference type="NCBI Taxonomy" id="434756"/>
    <lineage>
        <taxon>Eukaryota</taxon>
        <taxon>Metazoa</taxon>
        <taxon>Ecdysozoa</taxon>
        <taxon>Arthropoda</taxon>
        <taxon>Chelicerata</taxon>
        <taxon>Arachnida</taxon>
        <taxon>Araneae</taxon>
        <taxon>Araneomorphae</taxon>
        <taxon>Entelegynae</taxon>
        <taxon>Lycosoidea</taxon>
        <taxon>Lycosidae</taxon>
        <taxon>Lycosa</taxon>
    </lineage>
</organism>
<accession>B6DCP1</accession>
<name>TX152_LYCSI</name>